<organism>
    <name type="scientific">Burkholderia multivorans (strain ATCC 17616 / 249)</name>
    <dbReference type="NCBI Taxonomy" id="395019"/>
    <lineage>
        <taxon>Bacteria</taxon>
        <taxon>Pseudomonadati</taxon>
        <taxon>Pseudomonadota</taxon>
        <taxon>Betaproteobacteria</taxon>
        <taxon>Burkholderiales</taxon>
        <taxon>Burkholderiaceae</taxon>
        <taxon>Burkholderia</taxon>
        <taxon>Burkholderia cepacia complex</taxon>
    </lineage>
</organism>
<comment type="function">
    <text evidence="1">ATP-dependent carboxylate-amine ligase which exhibits weak glutamate--cysteine ligase activity.</text>
</comment>
<comment type="catalytic activity">
    <reaction evidence="1">
        <text>L-cysteine + L-glutamate + ATP = gamma-L-glutamyl-L-cysteine + ADP + phosphate + H(+)</text>
        <dbReference type="Rhea" id="RHEA:13285"/>
        <dbReference type="ChEBI" id="CHEBI:15378"/>
        <dbReference type="ChEBI" id="CHEBI:29985"/>
        <dbReference type="ChEBI" id="CHEBI:30616"/>
        <dbReference type="ChEBI" id="CHEBI:35235"/>
        <dbReference type="ChEBI" id="CHEBI:43474"/>
        <dbReference type="ChEBI" id="CHEBI:58173"/>
        <dbReference type="ChEBI" id="CHEBI:456216"/>
        <dbReference type="EC" id="6.3.2.2"/>
    </reaction>
</comment>
<comment type="similarity">
    <text evidence="1">Belongs to the glutamate--cysteine ligase type 2 family. YbdK subfamily.</text>
</comment>
<feature type="chain" id="PRO_1000148209" description="Putative glutamate--cysteine ligase 2">
    <location>
        <begin position="1"/>
        <end position="371"/>
    </location>
</feature>
<keyword id="KW-0067">ATP-binding</keyword>
<keyword id="KW-0436">Ligase</keyword>
<keyword id="KW-0547">Nucleotide-binding</keyword>
<keyword id="KW-1185">Reference proteome</keyword>
<reference key="1">
    <citation type="submission" date="2007-10" db="EMBL/GenBank/DDBJ databases">
        <title>Complete sequence of chromosome 1 of Burkholderia multivorans ATCC 17616.</title>
        <authorList>
            <person name="Copeland A."/>
            <person name="Lucas S."/>
            <person name="Lapidus A."/>
            <person name="Barry K."/>
            <person name="Glavina del Rio T."/>
            <person name="Dalin E."/>
            <person name="Tice H."/>
            <person name="Pitluck S."/>
            <person name="Chain P."/>
            <person name="Malfatti S."/>
            <person name="Shin M."/>
            <person name="Vergez L."/>
            <person name="Schmutz J."/>
            <person name="Larimer F."/>
            <person name="Land M."/>
            <person name="Hauser L."/>
            <person name="Kyrpides N."/>
            <person name="Kim E."/>
            <person name="Tiedje J."/>
            <person name="Richardson P."/>
        </authorList>
    </citation>
    <scope>NUCLEOTIDE SEQUENCE [LARGE SCALE GENOMIC DNA]</scope>
    <source>
        <strain>ATCC 17616 / 249</strain>
    </source>
</reference>
<reference key="2">
    <citation type="submission" date="2007-04" db="EMBL/GenBank/DDBJ databases">
        <title>Complete genome sequence of Burkholderia multivorans ATCC 17616.</title>
        <authorList>
            <person name="Ohtsubo Y."/>
            <person name="Yamashita A."/>
            <person name="Kurokawa K."/>
            <person name="Takami H."/>
            <person name="Yuhara S."/>
            <person name="Nishiyama E."/>
            <person name="Endo R."/>
            <person name="Miyazaki R."/>
            <person name="Ono A."/>
            <person name="Yano K."/>
            <person name="Ito M."/>
            <person name="Sota M."/>
            <person name="Yuji N."/>
            <person name="Hattori M."/>
            <person name="Tsuda M."/>
        </authorList>
    </citation>
    <scope>NUCLEOTIDE SEQUENCE [LARGE SCALE GENOMIC DNA]</scope>
    <source>
        <strain>ATCC 17616 / 249</strain>
    </source>
</reference>
<proteinExistence type="inferred from homology"/>
<accession>A9AJC7</accession>
<name>GCS2_BURM1</name>
<dbReference type="EC" id="6.3.2.2" evidence="1"/>
<dbReference type="EMBL" id="CP000868">
    <property type="protein sequence ID" value="ABX13764.1"/>
    <property type="molecule type" value="Genomic_DNA"/>
</dbReference>
<dbReference type="EMBL" id="AP009385">
    <property type="protein sequence ID" value="BAG41986.1"/>
    <property type="molecule type" value="Genomic_DNA"/>
</dbReference>
<dbReference type="RefSeq" id="WP_006401501.1">
    <property type="nucleotide sequence ID" value="NC_010804.1"/>
</dbReference>
<dbReference type="SMR" id="A9AJC7"/>
<dbReference type="STRING" id="395019.BMULJ_00001"/>
<dbReference type="KEGG" id="bmj:BMULJ_00001"/>
<dbReference type="KEGG" id="bmu:Bmul_0069"/>
<dbReference type="eggNOG" id="COG2170">
    <property type="taxonomic scope" value="Bacteria"/>
</dbReference>
<dbReference type="HOGENOM" id="CLU_044848_1_1_4"/>
<dbReference type="Proteomes" id="UP000008815">
    <property type="component" value="Chromosome 1"/>
</dbReference>
<dbReference type="GO" id="GO:0005524">
    <property type="term" value="F:ATP binding"/>
    <property type="evidence" value="ECO:0007669"/>
    <property type="project" value="UniProtKB-KW"/>
</dbReference>
<dbReference type="GO" id="GO:0004357">
    <property type="term" value="F:glutamate-cysteine ligase activity"/>
    <property type="evidence" value="ECO:0007669"/>
    <property type="project" value="UniProtKB-EC"/>
</dbReference>
<dbReference type="GO" id="GO:0042398">
    <property type="term" value="P:modified amino acid biosynthetic process"/>
    <property type="evidence" value="ECO:0007669"/>
    <property type="project" value="InterPro"/>
</dbReference>
<dbReference type="Gene3D" id="3.30.590.20">
    <property type="match status" value="1"/>
</dbReference>
<dbReference type="HAMAP" id="MF_01609">
    <property type="entry name" value="Glu_cys_ligase_2"/>
    <property type="match status" value="1"/>
</dbReference>
<dbReference type="InterPro" id="IPR050141">
    <property type="entry name" value="GCL_type2/YbdK_subfam"/>
</dbReference>
<dbReference type="InterPro" id="IPR006336">
    <property type="entry name" value="GCS2"/>
</dbReference>
<dbReference type="InterPro" id="IPR014746">
    <property type="entry name" value="Gln_synth/guanido_kin_cat_dom"/>
</dbReference>
<dbReference type="InterPro" id="IPR011793">
    <property type="entry name" value="YbdK"/>
</dbReference>
<dbReference type="NCBIfam" id="TIGR02050">
    <property type="entry name" value="gshA_cyan_rel"/>
    <property type="match status" value="1"/>
</dbReference>
<dbReference type="NCBIfam" id="NF010040">
    <property type="entry name" value="PRK13516.1"/>
    <property type="match status" value="1"/>
</dbReference>
<dbReference type="PANTHER" id="PTHR36510">
    <property type="entry name" value="GLUTAMATE--CYSTEINE LIGASE 2-RELATED"/>
    <property type="match status" value="1"/>
</dbReference>
<dbReference type="PANTHER" id="PTHR36510:SF1">
    <property type="entry name" value="GLUTAMATE--CYSTEINE LIGASE 2-RELATED"/>
    <property type="match status" value="1"/>
</dbReference>
<dbReference type="Pfam" id="PF04107">
    <property type="entry name" value="GCS2"/>
    <property type="match status" value="1"/>
</dbReference>
<dbReference type="SUPFAM" id="SSF55931">
    <property type="entry name" value="Glutamine synthetase/guanido kinase"/>
    <property type="match status" value="1"/>
</dbReference>
<sequence>MALETFVNSEPFTFGVELEIQVVNTHNYDLTKAASDLMRLIQGETFPGNITPEITESMIELSTGICHTHEQALGELHAIRDVLVKAADQLNVGLAGGGTHAFQQWSDRQIYDAPRFQYLSELYGYLAKQFTVFGQHVHIGCPDPDSALFLLHSMSRFIPHFIALSASSPFVQNVDTGFHSARLNSVFAFPLSGRAPFALTWHDFEEYFTKMVNTGVVNSMKDFYWDIRPKPGYGTIEVRVMDTPLSVDRAAAIACYIQTLARYLLIDRPLTLTEDDYLVYTFNRFEACRFGLEGTCVNPQTGERRTIAEDILDTLDRIAPHAAELGSRAALDEIGALAKARVNDASWLRTVFKQEKSLNETVRQQCLRWRE</sequence>
<gene>
    <name type="ordered locus">Bmul_0069</name>
    <name type="ordered locus">BMULJ_00001</name>
</gene>
<protein>
    <recommendedName>
        <fullName evidence="1">Putative glutamate--cysteine ligase 2</fullName>
        <ecNumber evidence="1">6.3.2.2</ecNumber>
    </recommendedName>
    <alternativeName>
        <fullName evidence="1">Gamma-glutamylcysteine synthetase 2</fullName>
        <shortName evidence="1">GCS 2</shortName>
        <shortName evidence="1">Gamma-GCS 2</shortName>
    </alternativeName>
</protein>
<evidence type="ECO:0000255" key="1">
    <source>
        <dbReference type="HAMAP-Rule" id="MF_01609"/>
    </source>
</evidence>